<comment type="function">
    <text evidence="1">NDH-1 shuttles electrons from NADH, via FMN and iron-sulfur (Fe-S) centers, to quinones in the respiratory chain. The immediate electron acceptor for the enzyme in this species is believed to be ubiquinone. Couples the redox reaction to proton translocation (for every two electrons transferred, four hydrogen ions are translocated across the cytoplasmic membrane), and thus conserves the redox energy in a proton gradient.</text>
</comment>
<comment type="catalytic activity">
    <reaction evidence="1">
        <text>a quinone + NADH + 5 H(+)(in) = a quinol + NAD(+) + 4 H(+)(out)</text>
        <dbReference type="Rhea" id="RHEA:57888"/>
        <dbReference type="ChEBI" id="CHEBI:15378"/>
        <dbReference type="ChEBI" id="CHEBI:24646"/>
        <dbReference type="ChEBI" id="CHEBI:57540"/>
        <dbReference type="ChEBI" id="CHEBI:57945"/>
        <dbReference type="ChEBI" id="CHEBI:132124"/>
    </reaction>
</comment>
<comment type="subunit">
    <text evidence="1">NDH-1 is composed of 13 different subunits. Subunits NuoB, CD, E, F, and G constitute the peripheral sector of the complex.</text>
</comment>
<comment type="subcellular location">
    <subcellularLocation>
        <location evidence="1">Cell inner membrane</location>
        <topology evidence="1">Peripheral membrane protein</topology>
        <orientation evidence="1">Cytoplasmic side</orientation>
    </subcellularLocation>
</comment>
<comment type="similarity">
    <text evidence="1">In the N-terminal section; belongs to the complex I 30 kDa subunit family.</text>
</comment>
<comment type="similarity">
    <text evidence="1">In the C-terminal section; belongs to the complex I 49 kDa subunit family.</text>
</comment>
<dbReference type="EC" id="7.1.1.-" evidence="1"/>
<dbReference type="EMBL" id="AP008232">
    <property type="protein sequence ID" value="BAE74874.1"/>
    <property type="molecule type" value="Genomic_DNA"/>
</dbReference>
<dbReference type="SMR" id="Q2NSK1"/>
<dbReference type="STRING" id="343509.SG1599"/>
<dbReference type="KEGG" id="sgl:SG1599"/>
<dbReference type="eggNOG" id="COG0649">
    <property type="taxonomic scope" value="Bacteria"/>
</dbReference>
<dbReference type="eggNOG" id="COG0852">
    <property type="taxonomic scope" value="Bacteria"/>
</dbReference>
<dbReference type="HOGENOM" id="CLU_015134_3_2_6"/>
<dbReference type="OrthoDB" id="9801496at2"/>
<dbReference type="BioCyc" id="SGLO343509:SGP1_RS14535-MONOMER"/>
<dbReference type="Proteomes" id="UP000001932">
    <property type="component" value="Chromosome"/>
</dbReference>
<dbReference type="GO" id="GO:0030964">
    <property type="term" value="C:NADH dehydrogenase complex"/>
    <property type="evidence" value="ECO:0007669"/>
    <property type="project" value="InterPro"/>
</dbReference>
<dbReference type="GO" id="GO:0005886">
    <property type="term" value="C:plasma membrane"/>
    <property type="evidence" value="ECO:0007669"/>
    <property type="project" value="UniProtKB-SubCell"/>
</dbReference>
<dbReference type="GO" id="GO:0051287">
    <property type="term" value="F:NAD binding"/>
    <property type="evidence" value="ECO:0007669"/>
    <property type="project" value="InterPro"/>
</dbReference>
<dbReference type="GO" id="GO:0008137">
    <property type="term" value="F:NADH dehydrogenase (ubiquinone) activity"/>
    <property type="evidence" value="ECO:0007669"/>
    <property type="project" value="InterPro"/>
</dbReference>
<dbReference type="GO" id="GO:0050136">
    <property type="term" value="F:NADH:ubiquinone reductase (non-electrogenic) activity"/>
    <property type="evidence" value="ECO:0007669"/>
    <property type="project" value="UniProtKB-UniRule"/>
</dbReference>
<dbReference type="GO" id="GO:0048038">
    <property type="term" value="F:quinone binding"/>
    <property type="evidence" value="ECO:0007669"/>
    <property type="project" value="UniProtKB-KW"/>
</dbReference>
<dbReference type="FunFam" id="1.10.645.10:FF:000001">
    <property type="entry name" value="NADH-quinone oxidoreductase subunit C/D"/>
    <property type="match status" value="1"/>
</dbReference>
<dbReference type="FunFam" id="3.30.460.80:FF:000001">
    <property type="entry name" value="NADH-quinone oxidoreductase subunit C/D"/>
    <property type="match status" value="1"/>
</dbReference>
<dbReference type="Gene3D" id="1.10.645.10">
    <property type="entry name" value="Cytochrome-c3 Hydrogenase, chain B"/>
    <property type="match status" value="1"/>
</dbReference>
<dbReference type="Gene3D" id="3.30.460.80">
    <property type="entry name" value="NADH:ubiquinone oxidoreductase, 30kDa subunit"/>
    <property type="match status" value="1"/>
</dbReference>
<dbReference type="HAMAP" id="MF_01359">
    <property type="entry name" value="NDH1_NuoCD_1"/>
    <property type="match status" value="1"/>
</dbReference>
<dbReference type="HAMAP" id="MF_01358">
    <property type="entry name" value="NDH1_NuoD"/>
    <property type="match status" value="1"/>
</dbReference>
<dbReference type="InterPro" id="IPR010218">
    <property type="entry name" value="NADH_DH_suC"/>
</dbReference>
<dbReference type="InterPro" id="IPR023062">
    <property type="entry name" value="NADH_DH_suCD"/>
</dbReference>
<dbReference type="InterPro" id="IPR001135">
    <property type="entry name" value="NADH_Q_OxRdtase_suD"/>
</dbReference>
<dbReference type="InterPro" id="IPR037232">
    <property type="entry name" value="NADH_quin_OxRdtase_su_C/D-like"/>
</dbReference>
<dbReference type="InterPro" id="IPR001268">
    <property type="entry name" value="NADH_UbQ_OxRdtase_30kDa_su"/>
</dbReference>
<dbReference type="InterPro" id="IPR014029">
    <property type="entry name" value="NADH_UbQ_OxRdtase_49kDa_CS"/>
</dbReference>
<dbReference type="InterPro" id="IPR022885">
    <property type="entry name" value="NDH1_su_D/H"/>
</dbReference>
<dbReference type="InterPro" id="IPR029014">
    <property type="entry name" value="NiFe-Hase_large"/>
</dbReference>
<dbReference type="NCBIfam" id="TIGR01961">
    <property type="entry name" value="NuoC_fam"/>
    <property type="match status" value="1"/>
</dbReference>
<dbReference type="NCBIfam" id="TIGR01962">
    <property type="entry name" value="NuoD"/>
    <property type="match status" value="1"/>
</dbReference>
<dbReference type="NCBIfam" id="NF004739">
    <property type="entry name" value="PRK06075.1"/>
    <property type="match status" value="1"/>
</dbReference>
<dbReference type="NCBIfam" id="NF008728">
    <property type="entry name" value="PRK11742.1"/>
    <property type="match status" value="1"/>
</dbReference>
<dbReference type="PANTHER" id="PTHR11993:SF45">
    <property type="entry name" value="NADH-QUINONE OXIDOREDUCTASE SUBUNIT C_D"/>
    <property type="match status" value="1"/>
</dbReference>
<dbReference type="PANTHER" id="PTHR11993">
    <property type="entry name" value="NADH-UBIQUINONE OXIDOREDUCTASE 49 KDA SUBUNIT"/>
    <property type="match status" value="1"/>
</dbReference>
<dbReference type="Pfam" id="PF00329">
    <property type="entry name" value="Complex1_30kDa"/>
    <property type="match status" value="1"/>
</dbReference>
<dbReference type="Pfam" id="PF00346">
    <property type="entry name" value="Complex1_49kDa"/>
    <property type="match status" value="1"/>
</dbReference>
<dbReference type="SUPFAM" id="SSF56762">
    <property type="entry name" value="HydB/Nqo4-like"/>
    <property type="match status" value="1"/>
</dbReference>
<dbReference type="SUPFAM" id="SSF143243">
    <property type="entry name" value="Nqo5-like"/>
    <property type="match status" value="1"/>
</dbReference>
<dbReference type="PROSITE" id="PS00535">
    <property type="entry name" value="COMPLEX1_49K"/>
    <property type="match status" value="1"/>
</dbReference>
<reference key="1">
    <citation type="journal article" date="2006" name="Genome Res.">
        <title>Massive genome erosion and functional adaptations provide insights into the symbiotic lifestyle of Sodalis glossinidius in the tsetse host.</title>
        <authorList>
            <person name="Toh H."/>
            <person name="Weiss B.L."/>
            <person name="Perkin S.A.H."/>
            <person name="Yamashita A."/>
            <person name="Oshima K."/>
            <person name="Hattori M."/>
            <person name="Aksoy S."/>
        </authorList>
    </citation>
    <scope>NUCLEOTIDE SEQUENCE [LARGE SCALE GENOMIC DNA]</scope>
    <source>
        <strain>morsitans</strain>
    </source>
</reference>
<gene>
    <name evidence="1" type="primary">nuoC</name>
    <name evidence="1" type="synonym">nuoCD</name>
    <name evidence="1" type="synonym">nuoD</name>
    <name type="ordered locus">SG1599</name>
</gene>
<proteinExistence type="inferred from homology"/>
<sequence>MTELMTQNSALPVWQSQDHQDDPVIAELRNHFGPDAFSVQPTRTGIPVVWVKREQILKVLTFLKKLPKPYVMLYDLHGVDERLRTHRQGLPAADFTVFYHLISIDRNRDIMLKVALSENDLHLPTCTRIFPNANWYERETWEMFGMTFDGHTHLTRIMMPKSWEGHPLRKDYPARATEFDPFVLTKQKEDLEMEGLTFKPEEWGMKRGKDNEDFMFLNLGPNHPSAHGAFRIILQLDGEEIVDCVPDIGYHHRGAEKMGERQSWHSYIPYTDRVEYLGGCVNEMPYVLAVEKLAGIVVPDRVNVIRVMLSELFRINSHLLYISTYIQDVGGMTPVFLAFTDRQKIYDVVEAITGFRMHPAWFRIGGVAHDLPRGWEGLLREFLDWLPKRLDSYVKVALRNSVLRARAEGVAAYGAKEALDWGVTGAALRATGIDFDVRKWRPYSGYENFNFEVPVGDGVSDCYSRVMLKVEEMRQSLRILEQCLNNMPAGPFKADHPLTTPPPKERTLQHIETLITHFLQVSWGPVMPANESFQMIEATKGINSYYLTSDGSTMSYRTRIRTPSFPHLQQIPSVIRGSLVSDLIVYLGSIDFVMSDVDR</sequence>
<organism>
    <name type="scientific">Sodalis glossinidius (strain morsitans)</name>
    <dbReference type="NCBI Taxonomy" id="343509"/>
    <lineage>
        <taxon>Bacteria</taxon>
        <taxon>Pseudomonadati</taxon>
        <taxon>Pseudomonadota</taxon>
        <taxon>Gammaproteobacteria</taxon>
        <taxon>Enterobacterales</taxon>
        <taxon>Bruguierivoracaceae</taxon>
        <taxon>Sodalis</taxon>
    </lineage>
</organism>
<keyword id="KW-0997">Cell inner membrane</keyword>
<keyword id="KW-1003">Cell membrane</keyword>
<keyword id="KW-0472">Membrane</keyword>
<keyword id="KW-0511">Multifunctional enzyme</keyword>
<keyword id="KW-0520">NAD</keyword>
<keyword id="KW-0874">Quinone</keyword>
<keyword id="KW-1278">Translocase</keyword>
<keyword id="KW-0813">Transport</keyword>
<keyword id="KW-0830">Ubiquinone</keyword>
<evidence type="ECO:0000255" key="1">
    <source>
        <dbReference type="HAMAP-Rule" id="MF_01359"/>
    </source>
</evidence>
<protein>
    <recommendedName>
        <fullName evidence="1">NADH-quinone oxidoreductase subunit C/D</fullName>
        <ecNumber evidence="1">7.1.1.-</ecNumber>
    </recommendedName>
    <alternativeName>
        <fullName evidence="1">NADH dehydrogenase I subunit C/D</fullName>
    </alternativeName>
    <alternativeName>
        <fullName evidence="1">NDH-1 subunit C/D</fullName>
    </alternativeName>
</protein>
<name>NUOCD_SODGM</name>
<feature type="chain" id="PRO_0000358701" description="NADH-quinone oxidoreductase subunit C/D">
    <location>
        <begin position="1"/>
        <end position="599"/>
    </location>
</feature>
<feature type="region of interest" description="NADH dehydrogenase I subunit C" evidence="1">
    <location>
        <begin position="1"/>
        <end position="189"/>
    </location>
</feature>
<feature type="region of interest" description="NADH dehydrogenase I subunit D" evidence="1">
    <location>
        <begin position="213"/>
        <end position="599"/>
    </location>
</feature>
<accession>Q2NSK1</accession>